<evidence type="ECO:0000250" key="1"/>
<evidence type="ECO:0000250" key="2">
    <source>
        <dbReference type="UniProtKB" id="Q61419"/>
    </source>
</evidence>
<evidence type="ECO:0000255" key="3">
    <source>
        <dbReference type="PROSITE-ProRule" id="PRU00628"/>
    </source>
</evidence>
<evidence type="ECO:0000305" key="4"/>
<comment type="function">
    <text evidence="2">Sialic acids are components of carbohydrate chains of glycoconjugates and are involved in cell-cell recognition and cell-pathogen interactions. Catalyzes the conversion of CMP-N-acetylneuraminic acid (CMP-Neu5Ac) into its hydroxylated derivative CMP-N-glycolylneuraminic acid (CMP-Neu5Gc), a sialic acid abundantly expressed at the surface of many cells.</text>
</comment>
<comment type="catalytic activity">
    <reaction>
        <text>CMP-N-acetyl-beta-neuraminate + 2 Fe(II)-[cytochrome b5] + O2 + 2 H(+) = CMP-N-glycoloyl-beta-neuraminate + 2 Fe(III)-[cytochrome b5] + H2O</text>
        <dbReference type="Rhea" id="RHEA:16145"/>
        <dbReference type="Rhea" id="RHEA-COMP:10438"/>
        <dbReference type="Rhea" id="RHEA-COMP:10439"/>
        <dbReference type="ChEBI" id="CHEBI:15377"/>
        <dbReference type="ChEBI" id="CHEBI:15378"/>
        <dbReference type="ChEBI" id="CHEBI:15379"/>
        <dbReference type="ChEBI" id="CHEBI:29033"/>
        <dbReference type="ChEBI" id="CHEBI:29034"/>
        <dbReference type="ChEBI" id="CHEBI:57812"/>
        <dbReference type="ChEBI" id="CHEBI:58376"/>
        <dbReference type="EC" id="1.14.18.2"/>
    </reaction>
</comment>
<comment type="cofactor">
    <cofactor evidence="3">
        <name>[2Fe-2S] cluster</name>
        <dbReference type="ChEBI" id="CHEBI:190135"/>
    </cofactor>
    <text evidence="3">Binds 1 [2Fe-2S] cluster per subunit.</text>
</comment>
<comment type="pathway">
    <text>Amino-sugar metabolism; N-acetylneuraminate metabolism.</text>
</comment>
<comment type="subcellular location">
    <subcellularLocation>
        <location evidence="1">Cytoplasm</location>
    </subcellularLocation>
</comment>
<comment type="similarity">
    <text evidence="4">Belongs to the CMP-Neu5Ac hydroxylase family.</text>
</comment>
<dbReference type="EC" id="1.14.18.2"/>
<dbReference type="EMBL" id="BC042338">
    <property type="protein sequence ID" value="AAH42338.1"/>
    <property type="molecule type" value="mRNA"/>
</dbReference>
<dbReference type="RefSeq" id="NP_001080297.1">
    <property type="nucleotide sequence ID" value="NM_001086828.1"/>
</dbReference>
<dbReference type="DNASU" id="379989"/>
<dbReference type="GeneID" id="379989"/>
<dbReference type="KEGG" id="xla:379989"/>
<dbReference type="AGR" id="Xenbase:XB-GENE-988338"/>
<dbReference type="CTD" id="379989"/>
<dbReference type="Xenbase" id="XB-GENE-988338">
    <property type="gene designation" value="cmah.L"/>
</dbReference>
<dbReference type="OrthoDB" id="332863at2759"/>
<dbReference type="UniPathway" id="UPA00628"/>
<dbReference type="Proteomes" id="UP000186698">
    <property type="component" value="Chromosome 6L"/>
</dbReference>
<dbReference type="Bgee" id="379989">
    <property type="expression patterns" value="Expressed in zone of skin and 8 other cell types or tissues"/>
</dbReference>
<dbReference type="GO" id="GO:0005737">
    <property type="term" value="C:cytoplasm"/>
    <property type="evidence" value="ECO:0000318"/>
    <property type="project" value="GO_Central"/>
</dbReference>
<dbReference type="GO" id="GO:0051537">
    <property type="term" value="F:2 iron, 2 sulfur cluster binding"/>
    <property type="evidence" value="ECO:0007669"/>
    <property type="project" value="UniProtKB-KW"/>
</dbReference>
<dbReference type="GO" id="GO:0030338">
    <property type="term" value="F:CMP-N-acetylneuraminate monooxygenase activity"/>
    <property type="evidence" value="ECO:0000318"/>
    <property type="project" value="GO_Central"/>
</dbReference>
<dbReference type="GO" id="GO:0046872">
    <property type="term" value="F:metal ion binding"/>
    <property type="evidence" value="ECO:0007669"/>
    <property type="project" value="UniProtKB-KW"/>
</dbReference>
<dbReference type="GO" id="GO:0046381">
    <property type="term" value="P:CMP-N-acetylneuraminate metabolic process"/>
    <property type="evidence" value="ECO:0000318"/>
    <property type="project" value="GO_Central"/>
</dbReference>
<dbReference type="GO" id="GO:0006054">
    <property type="term" value="P:N-acetylneuraminate metabolic process"/>
    <property type="evidence" value="ECO:0007669"/>
    <property type="project" value="UniProtKB-UniPathway"/>
</dbReference>
<dbReference type="CDD" id="cd03473">
    <property type="entry name" value="Rieske_CMP_Neu5Ac_hydrolase_N"/>
    <property type="match status" value="1"/>
</dbReference>
<dbReference type="FunFam" id="3.60.15.10:FF:000025">
    <property type="entry name" value="Inactive cytidine monophosphate-N-acetylneuraminic acid hydroxylase"/>
    <property type="match status" value="1"/>
</dbReference>
<dbReference type="Gene3D" id="3.60.15.10">
    <property type="entry name" value="Ribonuclease Z/Hydroxyacylglutathione hydrolase-like"/>
    <property type="match status" value="1"/>
</dbReference>
<dbReference type="Gene3D" id="2.102.10.10">
    <property type="entry name" value="Rieske [2Fe-2S] iron-sulphur domain"/>
    <property type="match status" value="1"/>
</dbReference>
<dbReference type="InterPro" id="IPR037339">
    <property type="entry name" value="CMP-Neu5Ac_hydroxylase_Rieske"/>
</dbReference>
<dbReference type="InterPro" id="IPR027033">
    <property type="entry name" value="Cnh"/>
</dbReference>
<dbReference type="InterPro" id="IPR036866">
    <property type="entry name" value="RibonucZ/Hydroxyglut_hydro"/>
</dbReference>
<dbReference type="InterPro" id="IPR017941">
    <property type="entry name" value="Rieske_2Fe-2S"/>
</dbReference>
<dbReference type="InterPro" id="IPR036922">
    <property type="entry name" value="Rieske_2Fe-2S_sf"/>
</dbReference>
<dbReference type="PANTHER" id="PTHR46522">
    <property type="entry name" value="CYTIDINE MONOPHOSPHATE-N-ACETYLNEURAMINIC ACID HYDROXYLASE"/>
    <property type="match status" value="1"/>
</dbReference>
<dbReference type="PANTHER" id="PTHR46522:SF1">
    <property type="entry name" value="INACTIVE CYTIDINE MONOPHOSPHATE-N-ACETYLNEURAMINIC ACID HYDROXYLASE"/>
    <property type="match status" value="1"/>
</dbReference>
<dbReference type="Pfam" id="PF13483">
    <property type="entry name" value="Lactamase_B_3"/>
    <property type="match status" value="1"/>
</dbReference>
<dbReference type="Pfam" id="PF00355">
    <property type="entry name" value="Rieske"/>
    <property type="match status" value="1"/>
</dbReference>
<dbReference type="SUPFAM" id="SSF50022">
    <property type="entry name" value="ISP domain"/>
    <property type="match status" value="1"/>
</dbReference>
<dbReference type="SUPFAM" id="SSF56281">
    <property type="entry name" value="Metallo-hydrolase/oxidoreductase"/>
    <property type="match status" value="1"/>
</dbReference>
<dbReference type="PROSITE" id="PS51296">
    <property type="entry name" value="RIESKE"/>
    <property type="match status" value="1"/>
</dbReference>
<proteinExistence type="evidence at transcript level"/>
<gene>
    <name type="primary">cmah</name>
</gene>
<accession>Q8AVF5</accession>
<protein>
    <recommendedName>
        <fullName>Cytidine monophosphate-N-acetylneuraminic acid hydroxylase</fullName>
        <shortName>CMP-N-acetylneuraminic acid hydroxylase</shortName>
        <ecNumber>1.14.18.2</ecNumber>
    </recommendedName>
    <alternativeName>
        <fullName>CMP-N-acetylneuraminate monooxygenase</fullName>
    </alternativeName>
    <alternativeName>
        <fullName>CMP-Neu5Ac hydroxylase</fullName>
    </alternativeName>
    <alternativeName>
        <fullName>CMP-NeuAc hydroxylase</fullName>
    </alternativeName>
</protein>
<feature type="chain" id="PRO_0000127809" description="Cytidine monophosphate-N-acetylneuraminic acid hydroxylase">
    <location>
        <begin position="1"/>
        <end position="591"/>
    </location>
</feature>
<feature type="domain" description="Rieske" evidence="3">
    <location>
        <begin position="16"/>
        <end position="114"/>
    </location>
</feature>
<feature type="binding site" evidence="3">
    <location>
        <position position="56"/>
    </location>
    <ligand>
        <name>[2Fe-2S] cluster</name>
        <dbReference type="ChEBI" id="CHEBI:190135"/>
    </ligand>
</feature>
<feature type="binding site" evidence="3">
    <location>
        <position position="58"/>
    </location>
    <ligand>
        <name>[2Fe-2S] cluster</name>
        <dbReference type="ChEBI" id="CHEBI:190135"/>
    </ligand>
</feature>
<feature type="binding site" evidence="3">
    <location>
        <position position="77"/>
    </location>
    <ligand>
        <name>[2Fe-2S] cluster</name>
        <dbReference type="ChEBI" id="CHEBI:190135"/>
    </ligand>
</feature>
<feature type="binding site" evidence="3">
    <location>
        <position position="80"/>
    </location>
    <ligand>
        <name>[2Fe-2S] cluster</name>
        <dbReference type="ChEBI" id="CHEBI:190135"/>
    </ligand>
</feature>
<sequence length="591" mass="68369">MEQSNDGQTAHTLLHLASAEVESLKEGITFLRNKESGKNFIIYKNGEELRACKNLCKHQGGTFIKDIEDLGNRTVRCTKHNWKLDVSSMKYVNPPDSFCQDELVIENDDENGVSLVELSPPNPWDSDPRMAVCLEGGEVQVTYLTHACMDLKLGNKHMVFDPWLIGPAFARGWWLLHEPPCDWLERLCRADLIYISHMHSDHLSYPTLKKLSEKRPDIPIYVGKTERPVFWYLDKSGVKLTNINVVPFGIWQEVDENLRFMILMDGVHPEMDTCIIVEYKGNKILNTVDCTRPNGGKLPTNVALMMSDFAGGASGFPMTFSGGKFTEEWKSQFIKTERKKLLNYKAQLVKDLNPRIYCPFAGYFVEEHPSDKYIKETNLKNDAAELNMLIRNTSDVVTWTPKPGAILDLGRLLIDPTDKNGIIDPPPGTKIFKDSWDYDTYLSIHSFSFDDEIFHYPSWIKEYFTWAGFKGYNLVLRMIETDEHFVPLPKGYNYLVDFLDLSFPTERPERDHPYEEISSRATVIRHVVKHGLLWDDLYIGFQTRIQRNPDIYHHQFWNHFQIKLPLTPPDWKVFLDREKENNATLQNCSIM</sequence>
<organism>
    <name type="scientific">Xenopus laevis</name>
    <name type="common">African clawed frog</name>
    <dbReference type="NCBI Taxonomy" id="8355"/>
    <lineage>
        <taxon>Eukaryota</taxon>
        <taxon>Metazoa</taxon>
        <taxon>Chordata</taxon>
        <taxon>Craniata</taxon>
        <taxon>Vertebrata</taxon>
        <taxon>Euteleostomi</taxon>
        <taxon>Amphibia</taxon>
        <taxon>Batrachia</taxon>
        <taxon>Anura</taxon>
        <taxon>Pipoidea</taxon>
        <taxon>Pipidae</taxon>
        <taxon>Xenopodinae</taxon>
        <taxon>Xenopus</taxon>
        <taxon>Xenopus</taxon>
    </lineage>
</organism>
<keyword id="KW-0001">2Fe-2S</keyword>
<keyword id="KW-0963">Cytoplasm</keyword>
<keyword id="KW-0249">Electron transport</keyword>
<keyword id="KW-0408">Iron</keyword>
<keyword id="KW-0411">Iron-sulfur</keyword>
<keyword id="KW-0479">Metal-binding</keyword>
<keyword id="KW-0560">Oxidoreductase</keyword>
<keyword id="KW-1185">Reference proteome</keyword>
<keyword id="KW-0813">Transport</keyword>
<name>CMAH_XENLA</name>
<reference key="1">
    <citation type="submission" date="2003-01" db="EMBL/GenBank/DDBJ databases">
        <authorList>
            <consortium name="NIH - Xenopus Gene Collection (XGC) project"/>
        </authorList>
    </citation>
    <scope>NUCLEOTIDE SEQUENCE [LARGE SCALE MRNA]</scope>
    <source>
        <tissue>Embryo</tissue>
    </source>
</reference>